<protein>
    <recommendedName>
        <fullName evidence="2">RNA-directed RNA polymerase</fullName>
        <shortName>RdRp</shortName>
        <ecNumber evidence="2">2.7.7.48</ecNumber>
    </recommendedName>
    <alternativeName>
        <fullName>RNA replicase</fullName>
        <shortName>Protein A</shortName>
    </alternativeName>
</protein>
<comment type="function">
    <text evidence="1">RNA-dependent RNA polymerase, which replicates the viral genome composed of 2 RNA segments, RNA1 and RNA2. Does not need an exogenous primer. Also possesses a terminal nucleotidyl transferase (TNTase) activity. The TNTase catalyzes the addition of nucleotide to the 3'-end of plus- and minus-stranded RNAs, probably to repair the 3'-end nucleotide loss. Forms the open necked connection to the cytosol of the virus-induced replication vesicles. Mediates viral RNA1 recruitment.</text>
</comment>
<comment type="catalytic activity">
    <reaction evidence="2">
        <text>RNA(n) + a ribonucleoside 5'-triphosphate = RNA(n+1) + diphosphate</text>
        <dbReference type="Rhea" id="RHEA:21248"/>
        <dbReference type="Rhea" id="RHEA-COMP:14527"/>
        <dbReference type="Rhea" id="RHEA-COMP:17342"/>
        <dbReference type="ChEBI" id="CHEBI:33019"/>
        <dbReference type="ChEBI" id="CHEBI:61557"/>
        <dbReference type="ChEBI" id="CHEBI:140395"/>
        <dbReference type="EC" id="2.7.7.48"/>
    </reaction>
    <physiologicalReaction direction="left-to-right" evidence="1">
        <dbReference type="Rhea" id="RHEA:21249"/>
    </physiologicalReaction>
</comment>
<comment type="cofactor">
    <cofactor evidence="1">
        <name>Mn(2+)</name>
        <dbReference type="ChEBI" id="CHEBI:29035"/>
    </cofactor>
    <text evidence="1">For RdRP activity.</text>
</comment>
<comment type="subunit">
    <text evidence="1">Homododecamer. Forms 2 stacked rings of 35-nm in diameter, arranged in a crown-like structure at the opening of virus-induced replication vesicles. Interacts with protein B2.</text>
</comment>
<comment type="subcellular location">
    <subcellularLocation>
        <location evidence="1">Host mitochondrion outer membrane</location>
    </subcellularLocation>
    <text evidence="1">Part of the 30- to 90-nm invaginations of the host mitochondrial outer membrane that form the viral replication complexes vesicules.</text>
</comment>
<comment type="domain">
    <text evidence="1">The N-terminus is important for both membrane association and mitochondrial localization. It may also contain a RNA methyltransferase (MTase-GTase) capping domain. The C-terminus contains the RNA-dependent RNA polymerase domain and a structurally disordered region at the very end.</text>
</comment>
<comment type="miscellaneous">
    <text evidence="1">The viral bipartite genome is composed of RNA1 and RNA2.</text>
</comment>
<comment type="similarity">
    <text evidence="4">Belongs to the nodaviridae RNA polymerase family.</text>
</comment>
<feature type="chain" id="PRO_0000222449" description="RNA-directed RNA polymerase">
    <location>
        <begin position="1"/>
        <end position="973"/>
    </location>
</feature>
<feature type="domain" description="RdRp catalytic" evidence="2">
    <location>
        <begin position="558"/>
        <end position="683"/>
    </location>
</feature>
<feature type="region of interest" description="Capping" evidence="1">
    <location>
        <begin position="96"/>
        <end position="264"/>
    </location>
</feature>
<feature type="region of interest" description="Disordered" evidence="3">
    <location>
        <begin position="853"/>
        <end position="973"/>
    </location>
</feature>
<feature type="compositionally biased region" description="Basic and acidic residues" evidence="3">
    <location>
        <begin position="882"/>
        <end position="891"/>
    </location>
</feature>
<feature type="compositionally biased region" description="Low complexity" evidence="3">
    <location>
        <begin position="924"/>
        <end position="935"/>
    </location>
</feature>
<feature type="compositionally biased region" description="Low complexity" evidence="3">
    <location>
        <begin position="955"/>
        <end position="973"/>
    </location>
</feature>
<feature type="active site" description="For RdRp/TNTase activity" evidence="1">
    <location>
        <position position="669"/>
    </location>
</feature>
<name>RDRP_PAV</name>
<dbReference type="EC" id="2.7.7.48" evidence="2"/>
<dbReference type="EMBL" id="AF171942">
    <property type="protein sequence ID" value="AAF71691.1"/>
    <property type="molecule type" value="Genomic_RNA"/>
</dbReference>
<dbReference type="RefSeq" id="NP_620109.1">
    <property type="nucleotide sequence ID" value="NC_003691.1"/>
</dbReference>
<dbReference type="SMR" id="Q9J7Z2"/>
<dbReference type="GeneID" id="956347"/>
<dbReference type="KEGG" id="vg:956347"/>
<dbReference type="OrthoDB" id="155at10239"/>
<dbReference type="Proteomes" id="UP000204174">
    <property type="component" value="Genome"/>
</dbReference>
<dbReference type="GO" id="GO:0044193">
    <property type="term" value="C:host cell mitochondrial outer membrane"/>
    <property type="evidence" value="ECO:0007669"/>
    <property type="project" value="UniProtKB-SubCell"/>
</dbReference>
<dbReference type="GO" id="GO:0016020">
    <property type="term" value="C:membrane"/>
    <property type="evidence" value="ECO:0007669"/>
    <property type="project" value="UniProtKB-KW"/>
</dbReference>
<dbReference type="GO" id="GO:0000166">
    <property type="term" value="F:nucleotide binding"/>
    <property type="evidence" value="ECO:0007669"/>
    <property type="project" value="UniProtKB-KW"/>
</dbReference>
<dbReference type="GO" id="GO:0003723">
    <property type="term" value="F:RNA binding"/>
    <property type="evidence" value="ECO:0007669"/>
    <property type="project" value="InterPro"/>
</dbReference>
<dbReference type="GO" id="GO:0003968">
    <property type="term" value="F:RNA-directed RNA polymerase activity"/>
    <property type="evidence" value="ECO:0007669"/>
    <property type="project" value="UniProtKB-KW"/>
</dbReference>
<dbReference type="GO" id="GO:0006351">
    <property type="term" value="P:DNA-templated transcription"/>
    <property type="evidence" value="ECO:0007669"/>
    <property type="project" value="InterPro"/>
</dbReference>
<dbReference type="GO" id="GO:0039694">
    <property type="term" value="P:viral RNA genome replication"/>
    <property type="evidence" value="ECO:0007669"/>
    <property type="project" value="InterPro"/>
</dbReference>
<dbReference type="CDD" id="cd23173">
    <property type="entry name" value="ps-ssRNAv_Nodaviridae_RdRp"/>
    <property type="match status" value="1"/>
</dbReference>
<dbReference type="InterPro" id="IPR043502">
    <property type="entry name" value="DNA/RNA_pol_sf"/>
</dbReference>
<dbReference type="InterPro" id="IPR043647">
    <property type="entry name" value="Noda_Vmethyltr_dom"/>
</dbReference>
<dbReference type="InterPro" id="IPR001205">
    <property type="entry name" value="RNA-dir_pol_C"/>
</dbReference>
<dbReference type="InterPro" id="IPR007094">
    <property type="entry name" value="RNA-dir_pol_PSvirus"/>
</dbReference>
<dbReference type="Pfam" id="PF19222">
    <property type="entry name" value="Noda_Vmethyltr"/>
    <property type="match status" value="1"/>
</dbReference>
<dbReference type="Pfam" id="PF00680">
    <property type="entry name" value="RdRP_1"/>
    <property type="match status" value="1"/>
</dbReference>
<dbReference type="SUPFAM" id="SSF56672">
    <property type="entry name" value="DNA/RNA polymerases"/>
    <property type="match status" value="1"/>
</dbReference>
<dbReference type="PROSITE" id="PS50507">
    <property type="entry name" value="RDRP_SSRNA_POS"/>
    <property type="match status" value="1"/>
</dbReference>
<accession>Q9J7Z2</accession>
<proteinExistence type="inferred from homology"/>
<reference key="1">
    <citation type="journal article" date="2000" name="J. Virol.">
        <title>Characterization and construction of functional cDNA clones of Pariacoto virus, the first Alphanodavirus isolated outside Australasia.</title>
        <authorList>
            <person name="Johnson K.N."/>
            <person name="Zeddam J.-L."/>
            <person name="Ball L.A."/>
        </authorList>
    </citation>
    <scope>NUCLEOTIDE SEQUENCE [GENOMIC RNA]</scope>
</reference>
<keyword id="KW-1043">Host membrane</keyword>
<keyword id="KW-1045">Host mitochondrion</keyword>
<keyword id="KW-1047">Host mitochondrion outer membrane</keyword>
<keyword id="KW-0472">Membrane</keyword>
<keyword id="KW-0547">Nucleotide-binding</keyword>
<keyword id="KW-0548">Nucleotidyltransferase</keyword>
<keyword id="KW-0696">RNA-directed RNA polymerase</keyword>
<keyword id="KW-0808">Transferase</keyword>
<keyword id="KW-0693">Viral RNA replication</keyword>
<organismHost>
    <name type="scientific">Spodoptera eridania</name>
    <name type="common">Southern armyworm</name>
    <dbReference type="NCBI Taxonomy" id="37547"/>
</organismHost>
<sequence length="973" mass="108099">MEEHIPLPSQYESPKALPPRVPSSRWLRSLRPRLANSCLALKIRAHESLVKIRLCKPYDAQSRSKIIEKVIERRETRKTLAHQLKDLKLVPVARDHTHGRAAKFRTSANIWMNEAMRAAGYEPYNVSMSNHDIERGNRYFYFAKDLTIPYRNDPVSDNTGFVFCDVDYYADMEKWMQHFKPMLLYTLVPESLSYHCDDHSFHVNDDRVFFDVRGGASYSHQLWDYTGDTICVRGKNKELLVFTIEQKCIQGDPHRRIIFLEPAARVAWPFYKPMKVEVGLKRKCMTAGQVNVLYEPIDDKISLSASGSRHTVETTGRTLAAITARMKNKTSPPMVADVERILRDAGDKEACVNAPILFELIPEAKFRVNVVKTTATPTHFQPLGPLRTEDGETCGHAVTTTLATAPALLPMRGVNSDVATVNGRVKKPANTVIPFKEYKEYASEFVEFLVPEPGVGHPWDTAAVREVQDNRQQKARINMVAATVSTHSSNRLKAFIKAEAYAATNDPRNITTMAPELTLMMSCFTYAFKEKILYEQPWYGPGKTPKQVGRRLQSIAKHGTLESDYSRFDGSISEWLQKNVVKAAYMRFFKEHQRTEFQSWFSKVFMQMGTTTAGVRYEAGWGTRSGSPITTDGNTMLNAFVVYCCYRKLCHTPAEAWRKLSQGALLTGDDAVLAHENGLEPALLDVVKNLGLKVEAKVNGPDDPVSFCGRIYPRLSDCITSFQDPLRTIPKLHLTTNKGVSPEQAAANRAHGYLATDKATPIIGTWARRVIELTGDLKVKGATREEQYKLSNAHQQLDPSLIETAMANILGIDVGELKALDKAVSEAKALDQMPVVLGNCYKHKIEAVVGGEVVGPGPRVETVEPNHEQSSGTPEVVPEMAGHSERRDKSSNPRPGGKAEGLSSKAGKPRVPTRPAADRKAAAGSGNRRGPTNGRRPIRDRAPRGGGRPNPGTTPPVSNSETTTTTAVVHASA</sequence>
<organism>
    <name type="scientific">Pariacoto virus</name>
    <name type="common">PaV</name>
    <dbReference type="NCBI Taxonomy" id="103782"/>
    <lineage>
        <taxon>Viruses</taxon>
        <taxon>Riboviria</taxon>
        <taxon>Orthornavirae</taxon>
        <taxon>Kitrinoviricota</taxon>
        <taxon>Magsaviricetes</taxon>
        <taxon>Nodamuvirales</taxon>
        <taxon>Nodaviridae</taxon>
        <taxon>Alphanodavirus</taxon>
    </lineage>
</organism>
<evidence type="ECO:0000250" key="1">
    <source>
        <dbReference type="UniProtKB" id="Q66929"/>
    </source>
</evidence>
<evidence type="ECO:0000255" key="2">
    <source>
        <dbReference type="PROSITE-ProRule" id="PRU00539"/>
    </source>
</evidence>
<evidence type="ECO:0000256" key="3">
    <source>
        <dbReference type="SAM" id="MobiDB-lite"/>
    </source>
</evidence>
<evidence type="ECO:0000305" key="4"/>